<keyword id="KW-0025">Alternative splicing</keyword>
<keyword id="KW-0433">Leucine-rich repeat</keyword>
<keyword id="KW-1185">Reference proteome</keyword>
<keyword id="KW-0677">Repeat</keyword>
<gene>
    <name type="ordered locus">At2g26030</name>
    <name type="ORF">T19L18.16</name>
</gene>
<dbReference type="EMBL" id="AC004747">
    <property type="protein sequence ID" value="AAC31233.1"/>
    <property type="molecule type" value="Genomic_DNA"/>
</dbReference>
<dbReference type="EMBL" id="CP002685">
    <property type="protein sequence ID" value="AEC07786.1"/>
    <property type="molecule type" value="Genomic_DNA"/>
</dbReference>
<dbReference type="EMBL" id="CP002685">
    <property type="protein sequence ID" value="AEC07787.1"/>
    <property type="molecule type" value="Genomic_DNA"/>
</dbReference>
<dbReference type="EMBL" id="AY144457">
    <property type="protein sequence ID" value="AAN52167.1"/>
    <property type="molecule type" value="mRNA"/>
</dbReference>
<dbReference type="EMBL" id="AY649316">
    <property type="protein sequence ID" value="AAT69233.1"/>
    <property type="molecule type" value="mRNA"/>
</dbReference>
<dbReference type="EMBL" id="AK176562">
    <property type="protein sequence ID" value="BAD44325.1"/>
    <property type="molecule type" value="mRNA"/>
</dbReference>
<dbReference type="PIR" id="T02620">
    <property type="entry name" value="T02620"/>
</dbReference>
<dbReference type="RefSeq" id="NP_001031420.1">
    <molecule id="Q8H1M0-1"/>
    <property type="nucleotide sequence ID" value="NM_001036343.1"/>
</dbReference>
<dbReference type="RefSeq" id="NP_180173.1">
    <molecule id="Q8H1M0-1"/>
    <property type="nucleotide sequence ID" value="NM_128162.3"/>
</dbReference>
<dbReference type="BioGRID" id="2496">
    <property type="interactions" value="1"/>
</dbReference>
<dbReference type="FunCoup" id="Q8H1M0">
    <property type="interactions" value="99"/>
</dbReference>
<dbReference type="IntAct" id="Q8H1M0">
    <property type="interactions" value="1"/>
</dbReference>
<dbReference type="PaxDb" id="3702-AT2G26030.1"/>
<dbReference type="EnsemblPlants" id="AT2G26030.1">
    <molecule id="Q8H1M0-1"/>
    <property type="protein sequence ID" value="AT2G26030.1"/>
    <property type="gene ID" value="AT2G26030"/>
</dbReference>
<dbReference type="EnsemblPlants" id="AT2G26030.3">
    <molecule id="Q8H1M0-1"/>
    <property type="protein sequence ID" value="AT2G26030.3"/>
    <property type="gene ID" value="AT2G26030"/>
</dbReference>
<dbReference type="GeneID" id="817144"/>
<dbReference type="Gramene" id="AT2G26030.1">
    <molecule id="Q8H1M0-1"/>
    <property type="protein sequence ID" value="AT2G26030.1"/>
    <property type="gene ID" value="AT2G26030"/>
</dbReference>
<dbReference type="Gramene" id="AT2G26030.3">
    <molecule id="Q8H1M0-1"/>
    <property type="protein sequence ID" value="AT2G26030.3"/>
    <property type="gene ID" value="AT2G26030"/>
</dbReference>
<dbReference type="KEGG" id="ath:AT2G26030"/>
<dbReference type="Araport" id="AT2G26030"/>
<dbReference type="TAIR" id="AT2G26030"/>
<dbReference type="eggNOG" id="ENOG502RYTW">
    <property type="taxonomic scope" value="Eukaryota"/>
</dbReference>
<dbReference type="HOGENOM" id="CLU_010721_1_3_1"/>
<dbReference type="InParanoid" id="Q8H1M0"/>
<dbReference type="PhylomeDB" id="Q8H1M0"/>
<dbReference type="PRO" id="PR:Q8H1M0"/>
<dbReference type="Proteomes" id="UP000006548">
    <property type="component" value="Chromosome 2"/>
</dbReference>
<dbReference type="ExpressionAtlas" id="Q8H1M0">
    <property type="expression patterns" value="baseline and differential"/>
</dbReference>
<dbReference type="CDD" id="cd22160">
    <property type="entry name" value="F-box_AtFBL13-like"/>
    <property type="match status" value="1"/>
</dbReference>
<dbReference type="Gene3D" id="3.80.10.10">
    <property type="entry name" value="Ribonuclease Inhibitor"/>
    <property type="match status" value="1"/>
</dbReference>
<dbReference type="InterPro" id="IPR036047">
    <property type="entry name" value="F-box-like_dom_sf"/>
</dbReference>
<dbReference type="InterPro" id="IPR053781">
    <property type="entry name" value="F-box_AtFBL13-like"/>
</dbReference>
<dbReference type="InterPro" id="IPR001810">
    <property type="entry name" value="F-box_dom"/>
</dbReference>
<dbReference type="InterPro" id="IPR006566">
    <property type="entry name" value="FBD"/>
</dbReference>
<dbReference type="InterPro" id="IPR050232">
    <property type="entry name" value="FBL13/AtMIF1-like"/>
</dbReference>
<dbReference type="InterPro" id="IPR032675">
    <property type="entry name" value="LRR_dom_sf"/>
</dbReference>
<dbReference type="InterPro" id="IPR055411">
    <property type="entry name" value="LRR_FXL15/At3g58940/PEG3-like"/>
</dbReference>
<dbReference type="PANTHER" id="PTHR31900">
    <property type="entry name" value="F-BOX/RNI SUPERFAMILY PROTEIN-RELATED"/>
    <property type="match status" value="1"/>
</dbReference>
<dbReference type="PANTHER" id="PTHR31900:SF33">
    <property type="entry name" value="PROTEIN WITH RNI-LIKE_FBD-LIKE DOMAIN"/>
    <property type="match status" value="1"/>
</dbReference>
<dbReference type="Pfam" id="PF00646">
    <property type="entry name" value="F-box"/>
    <property type="match status" value="1"/>
</dbReference>
<dbReference type="Pfam" id="PF08387">
    <property type="entry name" value="FBD"/>
    <property type="match status" value="1"/>
</dbReference>
<dbReference type="Pfam" id="PF24758">
    <property type="entry name" value="LRR_At5g56370"/>
    <property type="match status" value="1"/>
</dbReference>
<dbReference type="SMART" id="SM00579">
    <property type="entry name" value="FBD"/>
    <property type="match status" value="1"/>
</dbReference>
<dbReference type="SMART" id="SM00256">
    <property type="entry name" value="FBOX"/>
    <property type="match status" value="1"/>
</dbReference>
<dbReference type="SUPFAM" id="SSF81383">
    <property type="entry name" value="F-box domain"/>
    <property type="match status" value="1"/>
</dbReference>
<dbReference type="SUPFAM" id="SSF52047">
    <property type="entry name" value="RNI-like"/>
    <property type="match status" value="1"/>
</dbReference>
<dbReference type="PROSITE" id="PS50181">
    <property type="entry name" value="FBOX"/>
    <property type="match status" value="1"/>
</dbReference>
<proteinExistence type="evidence at transcript level"/>
<reference key="1">
    <citation type="journal article" date="1999" name="Nature">
        <title>Sequence and analysis of chromosome 2 of the plant Arabidopsis thaliana.</title>
        <authorList>
            <person name="Lin X."/>
            <person name="Kaul S."/>
            <person name="Rounsley S.D."/>
            <person name="Shea T.P."/>
            <person name="Benito M.-I."/>
            <person name="Town C.D."/>
            <person name="Fujii C.Y."/>
            <person name="Mason T.M."/>
            <person name="Bowman C.L."/>
            <person name="Barnstead M.E."/>
            <person name="Feldblyum T.V."/>
            <person name="Buell C.R."/>
            <person name="Ketchum K.A."/>
            <person name="Lee J.J."/>
            <person name="Ronning C.M."/>
            <person name="Koo H.L."/>
            <person name="Moffat K.S."/>
            <person name="Cronin L.A."/>
            <person name="Shen M."/>
            <person name="Pai G."/>
            <person name="Van Aken S."/>
            <person name="Umayam L."/>
            <person name="Tallon L.J."/>
            <person name="Gill J.E."/>
            <person name="Adams M.D."/>
            <person name="Carrera A.J."/>
            <person name="Creasy T.H."/>
            <person name="Goodman H.M."/>
            <person name="Somerville C.R."/>
            <person name="Copenhaver G.P."/>
            <person name="Preuss D."/>
            <person name="Nierman W.C."/>
            <person name="White O."/>
            <person name="Eisen J.A."/>
            <person name="Salzberg S.L."/>
            <person name="Fraser C.M."/>
            <person name="Venter J.C."/>
        </authorList>
    </citation>
    <scope>NUCLEOTIDE SEQUENCE [LARGE SCALE GENOMIC DNA]</scope>
    <source>
        <strain>cv. Columbia</strain>
    </source>
</reference>
<reference key="2">
    <citation type="journal article" date="2017" name="Plant J.">
        <title>Araport11: a complete reannotation of the Arabidopsis thaliana reference genome.</title>
        <authorList>
            <person name="Cheng C.Y."/>
            <person name="Krishnakumar V."/>
            <person name="Chan A.P."/>
            <person name="Thibaud-Nissen F."/>
            <person name="Schobel S."/>
            <person name="Town C.D."/>
        </authorList>
    </citation>
    <scope>GENOME REANNOTATION</scope>
    <source>
        <strain>cv. Columbia</strain>
    </source>
</reference>
<reference key="3">
    <citation type="journal article" date="2005" name="Plant Physiol.">
        <title>Analysis of the cDNAs of hypothetical genes on Arabidopsis chromosome 2 reveals numerous transcript variants.</title>
        <authorList>
            <person name="Xiao Y.-L."/>
            <person name="Smith S.R."/>
            <person name="Ishmael N."/>
            <person name="Redman J.C."/>
            <person name="Kumar N."/>
            <person name="Monaghan E.L."/>
            <person name="Ayele M."/>
            <person name="Haas B.J."/>
            <person name="Wu H.C."/>
            <person name="Town C.D."/>
        </authorList>
    </citation>
    <scope>NUCLEOTIDE SEQUENCE [LARGE SCALE MRNA]</scope>
    <source>
        <strain>cv. Columbia</strain>
    </source>
</reference>
<reference key="4">
    <citation type="submission" date="2004-06" db="EMBL/GenBank/DDBJ databases">
        <authorList>
            <person name="Underwood B.A."/>
            <person name="Xiao Y.-L."/>
            <person name="Moskal W.A. Jr."/>
            <person name="Monaghan E.L."/>
            <person name="Wang W."/>
            <person name="Redman J.C."/>
            <person name="Wu H.C."/>
            <person name="Utterback T."/>
            <person name="Town C.D."/>
        </authorList>
    </citation>
    <scope>NUCLEOTIDE SEQUENCE [LARGE SCALE MRNA]</scope>
    <source>
        <strain>cv. Columbia</strain>
    </source>
</reference>
<reference key="5">
    <citation type="submission" date="2004-09" db="EMBL/GenBank/DDBJ databases">
        <title>Large-scale analysis of RIKEN Arabidopsis full-length (RAFL) cDNAs.</title>
        <authorList>
            <person name="Totoki Y."/>
            <person name="Seki M."/>
            <person name="Ishida J."/>
            <person name="Nakajima M."/>
            <person name="Enju A."/>
            <person name="Kamiya A."/>
            <person name="Narusaka M."/>
            <person name="Shin-i T."/>
            <person name="Nakagawa M."/>
            <person name="Sakamoto N."/>
            <person name="Oishi K."/>
            <person name="Kohara Y."/>
            <person name="Kobayashi M."/>
            <person name="Toyoda A."/>
            <person name="Sakaki Y."/>
            <person name="Sakurai T."/>
            <person name="Iida K."/>
            <person name="Akiyama K."/>
            <person name="Satou M."/>
            <person name="Toyoda T."/>
            <person name="Konagaya A."/>
            <person name="Carninci P."/>
            <person name="Kawai J."/>
            <person name="Hayashizaki Y."/>
            <person name="Shinozaki K."/>
        </authorList>
    </citation>
    <scope>NUCLEOTIDE SEQUENCE [LARGE SCALE MRNA]</scope>
    <source>
        <strain>cv. Columbia</strain>
    </source>
</reference>
<organism>
    <name type="scientific">Arabidopsis thaliana</name>
    <name type="common">Mouse-ear cress</name>
    <dbReference type="NCBI Taxonomy" id="3702"/>
    <lineage>
        <taxon>Eukaryota</taxon>
        <taxon>Viridiplantae</taxon>
        <taxon>Streptophyta</taxon>
        <taxon>Embryophyta</taxon>
        <taxon>Tracheophyta</taxon>
        <taxon>Spermatophyta</taxon>
        <taxon>Magnoliopsida</taxon>
        <taxon>eudicotyledons</taxon>
        <taxon>Gunneridae</taxon>
        <taxon>Pentapetalae</taxon>
        <taxon>rosids</taxon>
        <taxon>malvids</taxon>
        <taxon>Brassicales</taxon>
        <taxon>Brassicaceae</taxon>
        <taxon>Camelineae</taxon>
        <taxon>Arabidopsis</taxon>
    </lineage>
</organism>
<comment type="alternative products">
    <event type="alternative splicing"/>
    <isoform>
        <id>Q8H1M0-1</id>
        <name>1</name>
        <sequence type="displayed"/>
    </isoform>
    <text>A number of isoforms are produced. According to EST sequences.</text>
</comment>
<protein>
    <recommendedName>
        <fullName>F-box/FBD/LRR-repeat protein At2g26030</fullName>
    </recommendedName>
</protein>
<feature type="chain" id="PRO_0000283109" description="F-box/FBD/LRR-repeat protein At2g26030">
    <location>
        <begin position="1"/>
        <end position="442"/>
    </location>
</feature>
<feature type="domain" description="F-box" evidence="1">
    <location>
        <begin position="3"/>
        <end position="49"/>
    </location>
</feature>
<feature type="repeat" description="LRR 1">
    <location>
        <begin position="128"/>
        <end position="160"/>
    </location>
</feature>
<feature type="repeat" description="LRR 2">
    <location>
        <begin position="162"/>
        <end position="187"/>
    </location>
</feature>
<feature type="repeat" description="LRR 3">
    <location>
        <begin position="188"/>
        <end position="214"/>
    </location>
</feature>
<feature type="repeat" description="LRR 4">
    <location>
        <begin position="234"/>
        <end position="260"/>
    </location>
</feature>
<feature type="repeat" description="LRR 5">
    <location>
        <begin position="278"/>
        <end position="309"/>
    </location>
</feature>
<feature type="repeat" description="LRR 6">
    <location>
        <begin position="324"/>
        <end position="352"/>
    </location>
</feature>
<feature type="domain" description="FBD">
    <location>
        <begin position="358"/>
        <end position="410"/>
    </location>
</feature>
<evidence type="ECO:0000255" key="1">
    <source>
        <dbReference type="PROSITE-ProRule" id="PRU00080"/>
    </source>
</evidence>
<accession>Q8H1M0</accession>
<accession>O80993</accession>
<accession>Q3EBT9</accession>
<name>FDL16_ARATH</name>
<sequence>MNCDRICELPDSLLTQVLSYLPTIDSVKTSVLSKRWEFLWLRVPVLDLKVSDFPDENYASFIDNFLEFNRKSRMRKFKLKYDEYTYDDDRLAGWVVTTVDRGIQHLDAKGFETNMCVREFMPQNIYKCNTLVSLMLVTVGIENPEFVVSLPSLKIMHLEDVWYYDDPLIMEKIISGCPVLEDFVLIRPIDFCNLDVLQFLRVRSLSLRSFRLTFEYSVSCTYFSVEIDAPRLEYLNFNDDQSDTIVVKNMTSLSMIDIDSEFNVKFGGSRLEPGDLRKRDIIRDFLTAISCVRHMIISRRTLEVLDRYSKLVPIPKFDNLYRLQAAVSRSMLQLLLVFLESCPNLENLILDFTVSTEPEQDGLTYVPQCLLSSLECVEIRELIMGEETGEKLVRYFLKNSVVLKKLILRLEDSSIANQDSDIFKELSTFTKRSRSCEVIIIH</sequence>